<sequence length="66" mass="6998">MSGKKSGLPDGRIPDRLPDGRPAVAWRSRWTEGTLPLWLVATAGGMAVLFVVGLFFYGSYTGVGSA</sequence>
<proteinExistence type="inferred from homology"/>
<feature type="chain" id="PRO_1000051816" description="Photosystem II reaction center protein J">
    <location>
        <begin position="1"/>
        <end position="66"/>
    </location>
</feature>
<feature type="transmembrane region" description="Helical" evidence="1">
    <location>
        <begin position="37"/>
        <end position="57"/>
    </location>
</feature>
<dbReference type="EMBL" id="CT971583">
    <property type="protein sequence ID" value="CAK22672.1"/>
    <property type="molecule type" value="Genomic_DNA"/>
</dbReference>
<dbReference type="SMR" id="A5GIA7"/>
<dbReference type="STRING" id="32051.SynWH7803_0246"/>
<dbReference type="KEGG" id="syx:SynWH7803_0246"/>
<dbReference type="eggNOG" id="ENOG5030SSD">
    <property type="taxonomic scope" value="Bacteria"/>
</dbReference>
<dbReference type="HOGENOM" id="CLU_2829784_0_0_3"/>
<dbReference type="OrthoDB" id="466474at2"/>
<dbReference type="Proteomes" id="UP000001566">
    <property type="component" value="Chromosome"/>
</dbReference>
<dbReference type="GO" id="GO:0009539">
    <property type="term" value="C:photosystem II reaction center"/>
    <property type="evidence" value="ECO:0007669"/>
    <property type="project" value="InterPro"/>
</dbReference>
<dbReference type="GO" id="GO:0031676">
    <property type="term" value="C:plasma membrane-derived thylakoid membrane"/>
    <property type="evidence" value="ECO:0007669"/>
    <property type="project" value="UniProtKB-SubCell"/>
</dbReference>
<dbReference type="GO" id="GO:0015979">
    <property type="term" value="P:photosynthesis"/>
    <property type="evidence" value="ECO:0007669"/>
    <property type="project" value="UniProtKB-UniRule"/>
</dbReference>
<dbReference type="Gene3D" id="6.10.250.2070">
    <property type="match status" value="1"/>
</dbReference>
<dbReference type="HAMAP" id="MF_01305">
    <property type="entry name" value="PSII_PsbJ"/>
    <property type="match status" value="1"/>
</dbReference>
<dbReference type="InterPro" id="IPR002682">
    <property type="entry name" value="PSII_PsbJ"/>
</dbReference>
<dbReference type="InterPro" id="IPR037267">
    <property type="entry name" value="PSII_PsbJ_sf"/>
</dbReference>
<dbReference type="NCBIfam" id="NF002722">
    <property type="entry name" value="PRK02565.1"/>
    <property type="match status" value="1"/>
</dbReference>
<dbReference type="Pfam" id="PF01788">
    <property type="entry name" value="PsbJ"/>
    <property type="match status" value="1"/>
</dbReference>
<dbReference type="SUPFAM" id="SSF161021">
    <property type="entry name" value="Photosystem II reaction center protein J, PsbJ"/>
    <property type="match status" value="1"/>
</dbReference>
<keyword id="KW-0472">Membrane</keyword>
<keyword id="KW-0602">Photosynthesis</keyword>
<keyword id="KW-0604">Photosystem II</keyword>
<keyword id="KW-0674">Reaction center</keyword>
<keyword id="KW-1185">Reference proteome</keyword>
<keyword id="KW-0793">Thylakoid</keyword>
<keyword id="KW-0812">Transmembrane</keyword>
<keyword id="KW-1133">Transmembrane helix</keyword>
<protein>
    <recommendedName>
        <fullName evidence="1">Photosystem II reaction center protein J</fullName>
        <shortName evidence="1">PSII-J</shortName>
    </recommendedName>
</protein>
<comment type="function">
    <text evidence="1">One of the components of the core complex of photosystem II (PSII). PSII is a light-driven water:plastoquinone oxidoreductase that uses light energy to abstract electrons from H(2)O, generating O(2) and a proton gradient subsequently used for ATP formation. It consists of a core antenna complex that captures photons, and an electron transfer chain that converts photonic excitation into a charge separation.</text>
</comment>
<comment type="subunit">
    <text evidence="1">PSII is composed of 1 copy each of membrane proteins PsbA, PsbB, PsbC, PsbD, PsbE, PsbF, PsbH, PsbI, PsbJ, PsbK, PsbL, PsbM, PsbT, PsbX, PsbY, PsbZ, Psb30/Ycf12, peripheral proteins PsbO, CyanoQ (PsbQ), PsbU, PsbV and a large number of cofactors. It forms dimeric complexes.</text>
</comment>
<comment type="subcellular location">
    <subcellularLocation>
        <location evidence="1">Cellular thylakoid membrane</location>
        <topology evidence="1">Single-pass membrane protein</topology>
    </subcellularLocation>
</comment>
<comment type="similarity">
    <text evidence="1">Belongs to the PsbJ family.</text>
</comment>
<gene>
    <name evidence="1" type="primary">psbJ</name>
    <name type="ordered locus">SynWH7803_0246</name>
</gene>
<accession>A5GIA7</accession>
<name>PSBJ_SYNPW</name>
<reference key="1">
    <citation type="submission" date="2006-05" db="EMBL/GenBank/DDBJ databases">
        <authorList>
            <consortium name="Genoscope"/>
        </authorList>
    </citation>
    <scope>NUCLEOTIDE SEQUENCE [LARGE SCALE GENOMIC DNA]</scope>
    <source>
        <strain>WH7803</strain>
    </source>
</reference>
<evidence type="ECO:0000255" key="1">
    <source>
        <dbReference type="HAMAP-Rule" id="MF_01305"/>
    </source>
</evidence>
<organism>
    <name type="scientific">Synechococcus sp. (strain WH7803)</name>
    <dbReference type="NCBI Taxonomy" id="32051"/>
    <lineage>
        <taxon>Bacteria</taxon>
        <taxon>Bacillati</taxon>
        <taxon>Cyanobacteriota</taxon>
        <taxon>Cyanophyceae</taxon>
        <taxon>Synechococcales</taxon>
        <taxon>Synechococcaceae</taxon>
        <taxon>Synechococcus</taxon>
    </lineage>
</organism>